<accession>Q5L3Z5</accession>
<reference key="1">
    <citation type="journal article" date="2004" name="Nucleic Acids Res.">
        <title>Thermoadaptation trait revealed by the genome sequence of thermophilic Geobacillus kaustophilus.</title>
        <authorList>
            <person name="Takami H."/>
            <person name="Takaki Y."/>
            <person name="Chee G.-J."/>
            <person name="Nishi S."/>
            <person name="Shimamura S."/>
            <person name="Suzuki H."/>
            <person name="Matsui S."/>
            <person name="Uchiyama I."/>
        </authorList>
    </citation>
    <scope>NUCLEOTIDE SEQUENCE [LARGE SCALE GENOMIC DNA]</scope>
    <source>
        <strain>HTA426</strain>
    </source>
</reference>
<evidence type="ECO:0000255" key="1">
    <source>
        <dbReference type="HAMAP-Rule" id="MF_01369"/>
    </source>
</evidence>
<evidence type="ECO:0000305" key="2"/>
<keyword id="KW-1185">Reference proteome</keyword>
<keyword id="KW-0687">Ribonucleoprotein</keyword>
<keyword id="KW-0689">Ribosomal protein</keyword>
<keyword id="KW-0694">RNA-binding</keyword>
<keyword id="KW-0699">rRNA-binding</keyword>
<protein>
    <recommendedName>
        <fullName evidence="1">Large ribosomal subunit protein uL23</fullName>
    </recommendedName>
    <alternativeName>
        <fullName evidence="2">50S ribosomal protein L23</fullName>
    </alternativeName>
</protein>
<name>RL23_GEOKA</name>
<gene>
    <name evidence="1" type="primary">rplW</name>
    <name type="ordered locus">GK0108</name>
</gene>
<organism>
    <name type="scientific">Geobacillus kaustophilus (strain HTA426)</name>
    <dbReference type="NCBI Taxonomy" id="235909"/>
    <lineage>
        <taxon>Bacteria</taxon>
        <taxon>Bacillati</taxon>
        <taxon>Bacillota</taxon>
        <taxon>Bacilli</taxon>
        <taxon>Bacillales</taxon>
        <taxon>Anoxybacillaceae</taxon>
        <taxon>Geobacillus</taxon>
        <taxon>Geobacillus thermoleovorans group</taxon>
    </lineage>
</organism>
<dbReference type="EMBL" id="BA000043">
    <property type="protein sequence ID" value="BAD74393.1"/>
    <property type="molecule type" value="Genomic_DNA"/>
</dbReference>
<dbReference type="RefSeq" id="WP_011229622.1">
    <property type="nucleotide sequence ID" value="NC_006510.1"/>
</dbReference>
<dbReference type="SMR" id="Q5L3Z5"/>
<dbReference type="STRING" id="235909.GK0108"/>
<dbReference type="GeneID" id="32062096"/>
<dbReference type="KEGG" id="gka:GK0108"/>
<dbReference type="eggNOG" id="COG0089">
    <property type="taxonomic scope" value="Bacteria"/>
</dbReference>
<dbReference type="HOGENOM" id="CLU_037562_3_2_9"/>
<dbReference type="Proteomes" id="UP000001172">
    <property type="component" value="Chromosome"/>
</dbReference>
<dbReference type="GO" id="GO:1990904">
    <property type="term" value="C:ribonucleoprotein complex"/>
    <property type="evidence" value="ECO:0007669"/>
    <property type="project" value="UniProtKB-KW"/>
</dbReference>
<dbReference type="GO" id="GO:0005840">
    <property type="term" value="C:ribosome"/>
    <property type="evidence" value="ECO:0007669"/>
    <property type="project" value="UniProtKB-KW"/>
</dbReference>
<dbReference type="GO" id="GO:0019843">
    <property type="term" value="F:rRNA binding"/>
    <property type="evidence" value="ECO:0007669"/>
    <property type="project" value="UniProtKB-UniRule"/>
</dbReference>
<dbReference type="GO" id="GO:0003735">
    <property type="term" value="F:structural constituent of ribosome"/>
    <property type="evidence" value="ECO:0007669"/>
    <property type="project" value="InterPro"/>
</dbReference>
<dbReference type="GO" id="GO:0006412">
    <property type="term" value="P:translation"/>
    <property type="evidence" value="ECO:0007669"/>
    <property type="project" value="UniProtKB-UniRule"/>
</dbReference>
<dbReference type="FunFam" id="3.30.70.330:FF:000001">
    <property type="entry name" value="50S ribosomal protein L23"/>
    <property type="match status" value="1"/>
</dbReference>
<dbReference type="Gene3D" id="3.30.70.330">
    <property type="match status" value="1"/>
</dbReference>
<dbReference type="HAMAP" id="MF_01369_B">
    <property type="entry name" value="Ribosomal_uL23_B"/>
    <property type="match status" value="1"/>
</dbReference>
<dbReference type="InterPro" id="IPR012677">
    <property type="entry name" value="Nucleotide-bd_a/b_plait_sf"/>
</dbReference>
<dbReference type="InterPro" id="IPR013025">
    <property type="entry name" value="Ribosomal_uL23-like"/>
</dbReference>
<dbReference type="InterPro" id="IPR012678">
    <property type="entry name" value="Ribosomal_uL23/eL15/eS24_sf"/>
</dbReference>
<dbReference type="InterPro" id="IPR001014">
    <property type="entry name" value="Ribosomal_uL23_CS"/>
</dbReference>
<dbReference type="NCBIfam" id="NF004363">
    <property type="entry name" value="PRK05738.2-4"/>
    <property type="match status" value="1"/>
</dbReference>
<dbReference type="PANTHER" id="PTHR11620">
    <property type="entry name" value="60S RIBOSOMAL PROTEIN L23A"/>
    <property type="match status" value="1"/>
</dbReference>
<dbReference type="Pfam" id="PF00276">
    <property type="entry name" value="Ribosomal_L23"/>
    <property type="match status" value="1"/>
</dbReference>
<dbReference type="SUPFAM" id="SSF54189">
    <property type="entry name" value="Ribosomal proteins S24e, L23 and L15e"/>
    <property type="match status" value="1"/>
</dbReference>
<dbReference type="PROSITE" id="PS00050">
    <property type="entry name" value="RIBOSOMAL_L23"/>
    <property type="match status" value="1"/>
</dbReference>
<proteinExistence type="inferred from homology"/>
<sequence>MKDPRDIIKRPIITENTMNLIGQKKYTFEVDVKANKTEVKDAVEKIFGVKVAKVNIMNYKGKFKRVGRYSGYTNRRRKAIVTLTPDSKEIELFEV</sequence>
<feature type="chain" id="PRO_0000272750" description="Large ribosomal subunit protein uL23">
    <location>
        <begin position="1"/>
        <end position="95"/>
    </location>
</feature>
<comment type="function">
    <text evidence="1">One of the early assembly proteins it binds 23S rRNA. One of the proteins that surrounds the polypeptide exit tunnel on the outside of the ribosome. Forms the main docking site for trigger factor binding to the ribosome.</text>
</comment>
<comment type="subunit">
    <text evidence="1">Part of the 50S ribosomal subunit. Contacts protein L29, and trigger factor when it is bound to the ribosome.</text>
</comment>
<comment type="similarity">
    <text evidence="1">Belongs to the universal ribosomal protein uL23 family.</text>
</comment>